<sequence length="388" mass="41344">MTTVSRHYVLAAGGTGGHLIPAFALAVELDRRGHHVALVTDERGAKIPGKPDFLPAHVLPAGRLGKNPVALFKGLRAIWQGRAMALRLFESFEPSCVIGFGGYPALPALLAAHAARIPTVIHEQNAVLGRVNRLLAKRVDAIATAYGEVDRLDPKLWGKVHRVGNPVRPDVLALRGEPFPEFTEDSLFRVLVTGGSQGASILSEVVPDGLAMLPPALRHRLQVTQQCRPEDLEVVRARYAAHEIPAELGTYFEDMQARLAGTHLFIGRAGASTIAELTAVGRPAILVPLPIATDDHQAANTREVVAAGGARAIRQSGFTPKELAKQIQAMAQHPHTLANAAHAAWNCGLPNAVKDLADLVESFGASPIMDVIRLDSTVSAASGQEQLA</sequence>
<organism>
    <name type="scientific">Novosphingobium aromaticivorans (strain ATCC 700278 / DSM 12444 / CCUG 56034 / CIP 105152 / NBRC 16084 / F199)</name>
    <dbReference type="NCBI Taxonomy" id="279238"/>
    <lineage>
        <taxon>Bacteria</taxon>
        <taxon>Pseudomonadati</taxon>
        <taxon>Pseudomonadota</taxon>
        <taxon>Alphaproteobacteria</taxon>
        <taxon>Sphingomonadales</taxon>
        <taxon>Sphingomonadaceae</taxon>
        <taxon>Novosphingobium</taxon>
    </lineage>
</organism>
<feature type="chain" id="PRO_0000315129" description="UDP-N-acetylglucosamine--N-acetylmuramyl-(pentapeptide) pyrophosphoryl-undecaprenol N-acetylglucosamine transferase">
    <location>
        <begin position="1"/>
        <end position="388"/>
    </location>
</feature>
<feature type="binding site" evidence="1">
    <location>
        <begin position="15"/>
        <end position="17"/>
    </location>
    <ligand>
        <name>UDP-N-acetyl-alpha-D-glucosamine</name>
        <dbReference type="ChEBI" id="CHEBI:57705"/>
    </ligand>
</feature>
<feature type="binding site" evidence="1">
    <location>
        <position position="125"/>
    </location>
    <ligand>
        <name>UDP-N-acetyl-alpha-D-glucosamine</name>
        <dbReference type="ChEBI" id="CHEBI:57705"/>
    </ligand>
</feature>
<feature type="binding site" evidence="1">
    <location>
        <position position="168"/>
    </location>
    <ligand>
        <name>UDP-N-acetyl-alpha-D-glucosamine</name>
        <dbReference type="ChEBI" id="CHEBI:57705"/>
    </ligand>
</feature>
<feature type="binding site" evidence="1">
    <location>
        <position position="196"/>
    </location>
    <ligand>
        <name>UDP-N-acetyl-alpha-D-glucosamine</name>
        <dbReference type="ChEBI" id="CHEBI:57705"/>
    </ligand>
</feature>
<feature type="binding site" evidence="1">
    <location>
        <position position="297"/>
    </location>
    <ligand>
        <name>UDP-N-acetyl-alpha-D-glucosamine</name>
        <dbReference type="ChEBI" id="CHEBI:57705"/>
    </ligand>
</feature>
<proteinExistence type="inferred from homology"/>
<protein>
    <recommendedName>
        <fullName evidence="1">UDP-N-acetylglucosamine--N-acetylmuramyl-(pentapeptide) pyrophosphoryl-undecaprenol N-acetylglucosamine transferase</fullName>
        <ecNumber evidence="1">2.4.1.227</ecNumber>
    </recommendedName>
    <alternativeName>
        <fullName evidence="1">Undecaprenyl-PP-MurNAc-pentapeptide-UDPGlcNAc GlcNAc transferase</fullName>
    </alternativeName>
</protein>
<reference key="1">
    <citation type="submission" date="2006-01" db="EMBL/GenBank/DDBJ databases">
        <title>Complete sequence of Novosphingobium aromaticivorans DSM 12444.</title>
        <authorList>
            <consortium name="US DOE Joint Genome Institute"/>
            <person name="Copeland A."/>
            <person name="Lucas S."/>
            <person name="Lapidus A."/>
            <person name="Barry K."/>
            <person name="Detter J.C."/>
            <person name="Glavina T."/>
            <person name="Hammon N."/>
            <person name="Israni S."/>
            <person name="Pitluck S."/>
            <person name="Chain P."/>
            <person name="Malfatti S."/>
            <person name="Shin M."/>
            <person name="Vergez L."/>
            <person name="Schmutz J."/>
            <person name="Larimer F."/>
            <person name="Land M."/>
            <person name="Kyrpides N."/>
            <person name="Ivanova N."/>
            <person name="Fredrickson J."/>
            <person name="Balkwill D."/>
            <person name="Romine M.F."/>
            <person name="Richardson P."/>
        </authorList>
    </citation>
    <scope>NUCLEOTIDE SEQUENCE [LARGE SCALE GENOMIC DNA]</scope>
    <source>
        <strain>ATCC 700278 / DSM 12444 / CCUG 56034 / CIP 105152 / NBRC 16084 / F199</strain>
    </source>
</reference>
<evidence type="ECO:0000255" key="1">
    <source>
        <dbReference type="HAMAP-Rule" id="MF_00033"/>
    </source>
</evidence>
<dbReference type="EC" id="2.4.1.227" evidence="1"/>
<dbReference type="EMBL" id="CP000248">
    <property type="protein sequence ID" value="ABD25578.1"/>
    <property type="molecule type" value="Genomic_DNA"/>
</dbReference>
<dbReference type="RefSeq" id="WP_011444792.1">
    <property type="nucleotide sequence ID" value="NC_007794.1"/>
</dbReference>
<dbReference type="SMR" id="Q2G995"/>
<dbReference type="STRING" id="279238.Saro_1133"/>
<dbReference type="CAZy" id="GT28">
    <property type="family name" value="Glycosyltransferase Family 28"/>
</dbReference>
<dbReference type="KEGG" id="nar:Saro_1133"/>
<dbReference type="eggNOG" id="COG0707">
    <property type="taxonomic scope" value="Bacteria"/>
</dbReference>
<dbReference type="HOGENOM" id="CLU_037404_2_1_5"/>
<dbReference type="UniPathway" id="UPA00219"/>
<dbReference type="Proteomes" id="UP000009134">
    <property type="component" value="Chromosome"/>
</dbReference>
<dbReference type="GO" id="GO:0005886">
    <property type="term" value="C:plasma membrane"/>
    <property type="evidence" value="ECO:0007669"/>
    <property type="project" value="UniProtKB-SubCell"/>
</dbReference>
<dbReference type="GO" id="GO:0051991">
    <property type="term" value="F:UDP-N-acetyl-D-glucosamine:N-acetylmuramoyl-L-alanyl-D-glutamyl-meso-2,6-diaminopimelyl-D-alanyl-D-alanine-diphosphoundecaprenol 4-beta-N-acetylglucosaminlytransferase activity"/>
    <property type="evidence" value="ECO:0007669"/>
    <property type="project" value="RHEA"/>
</dbReference>
<dbReference type="GO" id="GO:0050511">
    <property type="term" value="F:undecaprenyldiphospho-muramoylpentapeptide beta-N-acetylglucosaminyltransferase activity"/>
    <property type="evidence" value="ECO:0007669"/>
    <property type="project" value="UniProtKB-UniRule"/>
</dbReference>
<dbReference type="GO" id="GO:0005975">
    <property type="term" value="P:carbohydrate metabolic process"/>
    <property type="evidence" value="ECO:0007669"/>
    <property type="project" value="InterPro"/>
</dbReference>
<dbReference type="GO" id="GO:0051301">
    <property type="term" value="P:cell division"/>
    <property type="evidence" value="ECO:0007669"/>
    <property type="project" value="UniProtKB-KW"/>
</dbReference>
<dbReference type="GO" id="GO:0071555">
    <property type="term" value="P:cell wall organization"/>
    <property type="evidence" value="ECO:0007669"/>
    <property type="project" value="UniProtKB-KW"/>
</dbReference>
<dbReference type="GO" id="GO:0030259">
    <property type="term" value="P:lipid glycosylation"/>
    <property type="evidence" value="ECO:0007669"/>
    <property type="project" value="UniProtKB-UniRule"/>
</dbReference>
<dbReference type="GO" id="GO:0009252">
    <property type="term" value="P:peptidoglycan biosynthetic process"/>
    <property type="evidence" value="ECO:0007669"/>
    <property type="project" value="UniProtKB-UniRule"/>
</dbReference>
<dbReference type="GO" id="GO:0008360">
    <property type="term" value="P:regulation of cell shape"/>
    <property type="evidence" value="ECO:0007669"/>
    <property type="project" value="UniProtKB-KW"/>
</dbReference>
<dbReference type="CDD" id="cd03785">
    <property type="entry name" value="GT28_MurG"/>
    <property type="match status" value="1"/>
</dbReference>
<dbReference type="Gene3D" id="3.40.50.2000">
    <property type="entry name" value="Glycogen Phosphorylase B"/>
    <property type="match status" value="2"/>
</dbReference>
<dbReference type="HAMAP" id="MF_00033">
    <property type="entry name" value="MurG"/>
    <property type="match status" value="1"/>
</dbReference>
<dbReference type="InterPro" id="IPR006009">
    <property type="entry name" value="GlcNAc_MurG"/>
</dbReference>
<dbReference type="InterPro" id="IPR007235">
    <property type="entry name" value="Glyco_trans_28_C"/>
</dbReference>
<dbReference type="InterPro" id="IPR004276">
    <property type="entry name" value="GlycoTrans_28_N"/>
</dbReference>
<dbReference type="NCBIfam" id="TIGR01133">
    <property type="entry name" value="murG"/>
    <property type="match status" value="1"/>
</dbReference>
<dbReference type="PANTHER" id="PTHR21015:SF22">
    <property type="entry name" value="GLYCOSYLTRANSFERASE"/>
    <property type="match status" value="1"/>
</dbReference>
<dbReference type="PANTHER" id="PTHR21015">
    <property type="entry name" value="UDP-N-ACETYLGLUCOSAMINE--N-ACETYLMURAMYL-(PENTAPEPTIDE) PYROPHOSPHORYL-UNDECAPRENOL N-ACETYLGLUCOSAMINE TRANSFERASE 1"/>
    <property type="match status" value="1"/>
</dbReference>
<dbReference type="Pfam" id="PF04101">
    <property type="entry name" value="Glyco_tran_28_C"/>
    <property type="match status" value="1"/>
</dbReference>
<dbReference type="Pfam" id="PF03033">
    <property type="entry name" value="Glyco_transf_28"/>
    <property type="match status" value="1"/>
</dbReference>
<dbReference type="SUPFAM" id="SSF53756">
    <property type="entry name" value="UDP-Glycosyltransferase/glycogen phosphorylase"/>
    <property type="match status" value="1"/>
</dbReference>
<name>MURG_NOVAD</name>
<keyword id="KW-0131">Cell cycle</keyword>
<keyword id="KW-0132">Cell division</keyword>
<keyword id="KW-0997">Cell inner membrane</keyword>
<keyword id="KW-1003">Cell membrane</keyword>
<keyword id="KW-0133">Cell shape</keyword>
<keyword id="KW-0961">Cell wall biogenesis/degradation</keyword>
<keyword id="KW-0328">Glycosyltransferase</keyword>
<keyword id="KW-0472">Membrane</keyword>
<keyword id="KW-0573">Peptidoglycan synthesis</keyword>
<keyword id="KW-1185">Reference proteome</keyword>
<keyword id="KW-0808">Transferase</keyword>
<accession>Q2G995</accession>
<comment type="function">
    <text evidence="1">Cell wall formation. Catalyzes the transfer of a GlcNAc subunit on undecaprenyl-pyrophosphoryl-MurNAc-pentapeptide (lipid intermediate I) to form undecaprenyl-pyrophosphoryl-MurNAc-(pentapeptide)GlcNAc (lipid intermediate II).</text>
</comment>
<comment type="catalytic activity">
    <reaction evidence="1">
        <text>di-trans,octa-cis-undecaprenyl diphospho-N-acetyl-alpha-D-muramoyl-L-alanyl-D-glutamyl-meso-2,6-diaminopimeloyl-D-alanyl-D-alanine + UDP-N-acetyl-alpha-D-glucosamine = di-trans,octa-cis-undecaprenyl diphospho-[N-acetyl-alpha-D-glucosaminyl-(1-&gt;4)]-N-acetyl-alpha-D-muramoyl-L-alanyl-D-glutamyl-meso-2,6-diaminopimeloyl-D-alanyl-D-alanine + UDP + H(+)</text>
        <dbReference type="Rhea" id="RHEA:31227"/>
        <dbReference type="ChEBI" id="CHEBI:15378"/>
        <dbReference type="ChEBI" id="CHEBI:57705"/>
        <dbReference type="ChEBI" id="CHEBI:58223"/>
        <dbReference type="ChEBI" id="CHEBI:61387"/>
        <dbReference type="ChEBI" id="CHEBI:61388"/>
        <dbReference type="EC" id="2.4.1.227"/>
    </reaction>
</comment>
<comment type="pathway">
    <text evidence="1">Cell wall biogenesis; peptidoglycan biosynthesis.</text>
</comment>
<comment type="subcellular location">
    <subcellularLocation>
        <location evidence="1">Cell inner membrane</location>
        <topology evidence="1">Peripheral membrane protein</topology>
        <orientation evidence="1">Cytoplasmic side</orientation>
    </subcellularLocation>
</comment>
<comment type="similarity">
    <text evidence="1">Belongs to the glycosyltransferase 28 family. MurG subfamily.</text>
</comment>
<gene>
    <name evidence="1" type="primary">murG</name>
    <name type="ordered locus">Saro_1133</name>
</gene>